<protein>
    <recommendedName>
        <fullName evidence="1">Acyl carrier protein phosphodiesterase</fullName>
        <shortName evidence="1">ACP phosphodiesterase</shortName>
        <ecNumber evidence="1">3.1.4.14</ecNumber>
    </recommendedName>
</protein>
<dbReference type="EC" id="3.1.4.14" evidence="1"/>
<dbReference type="EMBL" id="FM200053">
    <property type="protein sequence ID" value="CAR60373.1"/>
    <property type="molecule type" value="Genomic_DNA"/>
</dbReference>
<dbReference type="RefSeq" id="WP_001009851.1">
    <property type="nucleotide sequence ID" value="NC_011147.1"/>
</dbReference>
<dbReference type="KEGG" id="sek:SSPA2163"/>
<dbReference type="HOGENOM" id="CLU_099370_1_0_6"/>
<dbReference type="Proteomes" id="UP000001869">
    <property type="component" value="Chromosome"/>
</dbReference>
<dbReference type="GO" id="GO:0008770">
    <property type="term" value="F:[acyl-carrier-protein] phosphodiesterase activity"/>
    <property type="evidence" value="ECO:0007669"/>
    <property type="project" value="UniProtKB-UniRule"/>
</dbReference>
<dbReference type="GO" id="GO:0006633">
    <property type="term" value="P:fatty acid biosynthetic process"/>
    <property type="evidence" value="ECO:0007669"/>
    <property type="project" value="UniProtKB-UniRule"/>
</dbReference>
<dbReference type="HAMAP" id="MF_01950">
    <property type="entry name" value="AcpH"/>
    <property type="match status" value="1"/>
</dbReference>
<dbReference type="InterPro" id="IPR007431">
    <property type="entry name" value="ACP_PD"/>
</dbReference>
<dbReference type="InterPro" id="IPR023491">
    <property type="entry name" value="ACP_phosphodiesterase_gpbac"/>
</dbReference>
<dbReference type="NCBIfam" id="NF007466">
    <property type="entry name" value="PRK10045.1"/>
    <property type="match status" value="1"/>
</dbReference>
<dbReference type="PANTHER" id="PTHR38764">
    <property type="entry name" value="ACYL CARRIER PROTEIN PHOSPHODIESTERASE"/>
    <property type="match status" value="1"/>
</dbReference>
<dbReference type="PANTHER" id="PTHR38764:SF1">
    <property type="entry name" value="ACYL CARRIER PROTEIN PHOSPHODIESTERASE"/>
    <property type="match status" value="1"/>
</dbReference>
<dbReference type="Pfam" id="PF04336">
    <property type="entry name" value="ACP_PD"/>
    <property type="match status" value="1"/>
</dbReference>
<dbReference type="PIRSF" id="PIRSF011489">
    <property type="entry name" value="DUF479"/>
    <property type="match status" value="1"/>
</dbReference>
<evidence type="ECO:0000255" key="1">
    <source>
        <dbReference type="HAMAP-Rule" id="MF_01950"/>
    </source>
</evidence>
<gene>
    <name evidence="1" type="primary">acpH</name>
    <name type="ordered locus">SSPA2163</name>
</gene>
<proteinExistence type="inferred from homology"/>
<organism>
    <name type="scientific">Salmonella paratyphi A (strain AKU_12601)</name>
    <dbReference type="NCBI Taxonomy" id="554290"/>
    <lineage>
        <taxon>Bacteria</taxon>
        <taxon>Pseudomonadati</taxon>
        <taxon>Pseudomonadota</taxon>
        <taxon>Gammaproteobacteria</taxon>
        <taxon>Enterobacterales</taxon>
        <taxon>Enterobacteriaceae</taxon>
        <taxon>Salmonella</taxon>
    </lineage>
</organism>
<sequence>MNFLAHLHLAHLADNSLSGNLLADFVRGNPATHYPPDVVEGIYMHRRIDVMTDNLPEAREAREWFRHETRRVAPITLDVMWDHFLSRHWTQISPDFPLQAFVGYAHAQVATILPDFPPRFVNLNDYLWSEKWLERYRDMDFIQNVLNGMANRRPRLDALRDSWYDLDAHYDALEERFWHFYPRMMAQAARKAL</sequence>
<accession>B5BDD0</accession>
<keyword id="KW-0275">Fatty acid biosynthesis</keyword>
<keyword id="KW-0276">Fatty acid metabolism</keyword>
<keyword id="KW-0378">Hydrolase</keyword>
<keyword id="KW-0444">Lipid biosynthesis</keyword>
<keyword id="KW-0443">Lipid metabolism</keyword>
<name>ACPH_SALPK</name>
<feature type="chain" id="PRO_1000188817" description="Acyl carrier protein phosphodiesterase">
    <location>
        <begin position="1"/>
        <end position="193"/>
    </location>
</feature>
<comment type="function">
    <text evidence="1">Converts holo-ACP to apo-ACP by hydrolytic cleavage of the phosphopantetheine prosthetic group from ACP.</text>
</comment>
<comment type="catalytic activity">
    <reaction evidence="1">
        <text>holo-[ACP] + H2O = apo-[ACP] + (R)-4'-phosphopantetheine + H(+)</text>
        <dbReference type="Rhea" id="RHEA:20537"/>
        <dbReference type="Rhea" id="RHEA-COMP:9685"/>
        <dbReference type="Rhea" id="RHEA-COMP:9690"/>
        <dbReference type="ChEBI" id="CHEBI:15377"/>
        <dbReference type="ChEBI" id="CHEBI:15378"/>
        <dbReference type="ChEBI" id="CHEBI:29999"/>
        <dbReference type="ChEBI" id="CHEBI:61723"/>
        <dbReference type="ChEBI" id="CHEBI:64479"/>
        <dbReference type="EC" id="3.1.4.14"/>
    </reaction>
</comment>
<comment type="similarity">
    <text evidence="1">Belongs to the AcpH family.</text>
</comment>
<reference key="1">
    <citation type="journal article" date="2009" name="BMC Genomics">
        <title>Pseudogene accumulation in the evolutionary histories of Salmonella enterica serovars Paratyphi A and Typhi.</title>
        <authorList>
            <person name="Holt K.E."/>
            <person name="Thomson N.R."/>
            <person name="Wain J."/>
            <person name="Langridge G.C."/>
            <person name="Hasan R."/>
            <person name="Bhutta Z.A."/>
            <person name="Quail M.A."/>
            <person name="Norbertczak H."/>
            <person name="Walker D."/>
            <person name="Simmonds M."/>
            <person name="White B."/>
            <person name="Bason N."/>
            <person name="Mungall K."/>
            <person name="Dougan G."/>
            <person name="Parkhill J."/>
        </authorList>
    </citation>
    <scope>NUCLEOTIDE SEQUENCE [LARGE SCALE GENOMIC DNA]</scope>
    <source>
        <strain>AKU_12601</strain>
    </source>
</reference>